<comment type="function">
    <text evidence="1">Required for the assembly and/or stability of the 40S ribosomal subunit. Required for the processing of the 20S rRNA-precursor to mature 18S rRNA in a late step of the maturation of 40S ribosomal subunits.</text>
</comment>
<comment type="subunit">
    <text evidence="1">Component of the small ribosomal subunit. Mature ribosomes consist of a small (40S) and a large (60S) subunit. The 40S subunit contains about 33 different proteins and 1 molecule of RNA (18S). The 60S subunit contains about 49 different proteins and 3 molecules of RNA (25S, 5.8S and 5S). Interacts with ribosomal protein S21.</text>
</comment>
<comment type="subcellular location">
    <subcellularLocation>
        <location evidence="1">Cytoplasm</location>
    </subcellularLocation>
</comment>
<comment type="similarity">
    <text evidence="1">Belongs to the universal ribosomal protein uS2 family.</text>
</comment>
<accession>A8BE86</accession>
<evidence type="ECO:0000255" key="1">
    <source>
        <dbReference type="HAMAP-Rule" id="MF_03015"/>
    </source>
</evidence>
<evidence type="ECO:0000256" key="2">
    <source>
        <dbReference type="SAM" id="MobiDB-lite"/>
    </source>
</evidence>
<evidence type="ECO:0000305" key="3"/>
<evidence type="ECO:0007829" key="4">
    <source>
        <dbReference type="PDB" id="7PWF"/>
    </source>
</evidence>
<name>RSSA_GIAIC</name>
<reference key="1">
    <citation type="journal article" date="2007" name="Science">
        <title>Genomic minimalism in the early diverging intestinal parasite Giardia lamblia.</title>
        <authorList>
            <person name="Morrison H.G."/>
            <person name="McArthur A.G."/>
            <person name="Gillin F.D."/>
            <person name="Aley S.B."/>
            <person name="Adam R.D."/>
            <person name="Olsen G.J."/>
            <person name="Best A.A."/>
            <person name="Cande W.Z."/>
            <person name="Chen F."/>
            <person name="Cipriano M.J."/>
            <person name="Davids B.J."/>
            <person name="Dawson S.C."/>
            <person name="Elmendorf H.G."/>
            <person name="Hehl A.B."/>
            <person name="Holder M.E."/>
            <person name="Huse S.M."/>
            <person name="Kim U.U."/>
            <person name="Lasek-Nesselquist E."/>
            <person name="Manning G."/>
            <person name="Nigam A."/>
            <person name="Nixon J.E.J."/>
            <person name="Palm D."/>
            <person name="Passamaneck N.E."/>
            <person name="Prabhu A."/>
            <person name="Reich C.I."/>
            <person name="Reiner D.S."/>
            <person name="Samuelson J."/>
            <person name="Svard S.G."/>
            <person name="Sogin M.L."/>
        </authorList>
    </citation>
    <scope>NUCLEOTIDE SEQUENCE [LARGE SCALE GENOMIC DNA]</scope>
    <source>
        <strain>ATCC 50803 / WB clone C6</strain>
    </source>
</reference>
<keyword id="KW-0002">3D-structure</keyword>
<keyword id="KW-0963">Cytoplasm</keyword>
<keyword id="KW-0687">Ribonucleoprotein</keyword>
<keyword id="KW-0689">Ribosomal protein</keyword>
<dbReference type="EMBL" id="AACB02000013">
    <property type="protein sequence ID" value="EDO79939.1"/>
    <property type="molecule type" value="Genomic_DNA"/>
</dbReference>
<dbReference type="RefSeq" id="XP_001707613.1">
    <property type="nucleotide sequence ID" value="XM_001707561.1"/>
</dbReference>
<dbReference type="PDB" id="7PWF">
    <property type="method" value="EM"/>
    <property type="resolution" value="2.85 A"/>
    <property type="chains" value="A=1-245"/>
</dbReference>
<dbReference type="PDB" id="7PWO">
    <property type="method" value="EM"/>
    <property type="resolution" value="2.75 A"/>
    <property type="chains" value="A1=1-245"/>
</dbReference>
<dbReference type="PDB" id="8BR8">
    <property type="method" value="EM"/>
    <property type="resolution" value="3.35 A"/>
    <property type="chains" value="SA=1-245"/>
</dbReference>
<dbReference type="PDB" id="8BRM">
    <property type="method" value="EM"/>
    <property type="resolution" value="3.33 A"/>
    <property type="chains" value="SA=1-245"/>
</dbReference>
<dbReference type="PDB" id="8BSI">
    <property type="method" value="EM"/>
    <property type="resolution" value="3.40 A"/>
    <property type="chains" value="SA=1-245"/>
</dbReference>
<dbReference type="PDB" id="8BSJ">
    <property type="method" value="EM"/>
    <property type="resolution" value="6.49 A"/>
    <property type="chains" value="SA=1-245"/>
</dbReference>
<dbReference type="PDB" id="8BTD">
    <property type="method" value="EM"/>
    <property type="resolution" value="4.90 A"/>
    <property type="chains" value="SA=1-245"/>
</dbReference>
<dbReference type="PDB" id="8BTR">
    <property type="method" value="EM"/>
    <property type="resolution" value="3.25 A"/>
    <property type="chains" value="SA=1-245"/>
</dbReference>
<dbReference type="PDB" id="8FVY">
    <property type="method" value="EM"/>
    <property type="resolution" value="2.94 A"/>
    <property type="chains" value="A=1-245"/>
</dbReference>
<dbReference type="PDB" id="8G4I">
    <property type="method" value="EM"/>
    <property type="resolution" value="3.24 A"/>
    <property type="chains" value="A=1-245"/>
</dbReference>
<dbReference type="PDB" id="8G4S">
    <property type="method" value="EM"/>
    <property type="resolution" value="3.14 A"/>
    <property type="chains" value="A=1-245"/>
</dbReference>
<dbReference type="PDBsum" id="7PWF"/>
<dbReference type="PDBsum" id="7PWO"/>
<dbReference type="PDBsum" id="8BR8"/>
<dbReference type="PDBsum" id="8BRM"/>
<dbReference type="PDBsum" id="8BSI"/>
<dbReference type="PDBsum" id="8BSJ"/>
<dbReference type="PDBsum" id="8BTD"/>
<dbReference type="PDBsum" id="8BTR"/>
<dbReference type="PDBsum" id="8FVY"/>
<dbReference type="PDBsum" id="8G4I"/>
<dbReference type="PDBsum" id="8G4S"/>
<dbReference type="EMDB" id="EMD-13680"/>
<dbReference type="EMDB" id="EMD-13683"/>
<dbReference type="EMDB" id="EMD-16211"/>
<dbReference type="EMDB" id="EMD-29495"/>
<dbReference type="EMDB" id="EMD-29721"/>
<dbReference type="EMDB" id="EMD-29730"/>
<dbReference type="SMR" id="A8BE86"/>
<dbReference type="STRING" id="184922.A8BE86"/>
<dbReference type="EnsemblProtists" id="EDO79939">
    <property type="protein sequence ID" value="EDO79939"/>
    <property type="gene ID" value="GL50803_7766"/>
</dbReference>
<dbReference type="GeneID" id="5700515"/>
<dbReference type="KEGG" id="gla:GL50803_007766"/>
<dbReference type="VEuPathDB" id="GiardiaDB:GL50803_7766"/>
<dbReference type="HOGENOM" id="CLU_058171_2_0_1"/>
<dbReference type="OMA" id="VKNFFEP"/>
<dbReference type="GO" id="GO:0022627">
    <property type="term" value="C:cytosolic small ribosomal subunit"/>
    <property type="evidence" value="ECO:0007669"/>
    <property type="project" value="UniProtKB-UniRule"/>
</dbReference>
<dbReference type="GO" id="GO:0003735">
    <property type="term" value="F:structural constituent of ribosome"/>
    <property type="evidence" value="ECO:0007669"/>
    <property type="project" value="UniProtKB-UniRule"/>
</dbReference>
<dbReference type="GO" id="GO:0000028">
    <property type="term" value="P:ribosomal small subunit assembly"/>
    <property type="evidence" value="ECO:0007669"/>
    <property type="project" value="UniProtKB-UniRule"/>
</dbReference>
<dbReference type="GO" id="GO:0006412">
    <property type="term" value="P:translation"/>
    <property type="evidence" value="ECO:0007669"/>
    <property type="project" value="UniProtKB-UniRule"/>
</dbReference>
<dbReference type="CDD" id="cd01425">
    <property type="entry name" value="RPS2"/>
    <property type="match status" value="1"/>
</dbReference>
<dbReference type="FunFam" id="3.40.50.10490:FF:000030">
    <property type="entry name" value="30S ribosomal protein S2"/>
    <property type="match status" value="1"/>
</dbReference>
<dbReference type="Gene3D" id="3.40.50.10490">
    <property type="entry name" value="Glucose-6-phosphate isomerase like protein, domain 1"/>
    <property type="match status" value="1"/>
</dbReference>
<dbReference type="HAMAP" id="MF_03015">
    <property type="entry name" value="Ribosomal_S2_euk"/>
    <property type="match status" value="1"/>
</dbReference>
<dbReference type="InterPro" id="IPR001865">
    <property type="entry name" value="Ribosomal_uS2"/>
</dbReference>
<dbReference type="InterPro" id="IPR018130">
    <property type="entry name" value="Ribosomal_uS2_CS"/>
</dbReference>
<dbReference type="InterPro" id="IPR027498">
    <property type="entry name" value="Ribosomal_uS2_euk"/>
</dbReference>
<dbReference type="InterPro" id="IPR005707">
    <property type="entry name" value="Ribosomal_uS2_euk/arc"/>
</dbReference>
<dbReference type="InterPro" id="IPR023591">
    <property type="entry name" value="Ribosomal_uS2_flav_dom_sf"/>
</dbReference>
<dbReference type="NCBIfam" id="TIGR01012">
    <property type="entry name" value="uS2_euk_arch"/>
    <property type="match status" value="1"/>
</dbReference>
<dbReference type="PANTHER" id="PTHR11489">
    <property type="entry name" value="40S RIBOSOMAL PROTEIN SA"/>
    <property type="match status" value="1"/>
</dbReference>
<dbReference type="Pfam" id="PF00318">
    <property type="entry name" value="Ribosomal_S2"/>
    <property type="match status" value="1"/>
</dbReference>
<dbReference type="PRINTS" id="PR00395">
    <property type="entry name" value="RIBOSOMALS2"/>
</dbReference>
<dbReference type="SUPFAM" id="SSF52313">
    <property type="entry name" value="Ribosomal protein S2"/>
    <property type="match status" value="1"/>
</dbReference>
<dbReference type="PROSITE" id="PS00962">
    <property type="entry name" value="RIBOSOMAL_S2_1"/>
    <property type="match status" value="1"/>
</dbReference>
<dbReference type="PROSITE" id="PS00963">
    <property type="entry name" value="RIBOSOMAL_S2_2"/>
    <property type="match status" value="1"/>
</dbReference>
<organism>
    <name type="scientific">Giardia intestinalis (strain ATCC 50803 / WB clone C6)</name>
    <name type="common">Giardia lamblia</name>
    <dbReference type="NCBI Taxonomy" id="184922"/>
    <lineage>
        <taxon>Eukaryota</taxon>
        <taxon>Metamonada</taxon>
        <taxon>Diplomonadida</taxon>
        <taxon>Hexamitidae</taxon>
        <taxon>Giardiinae</taxon>
        <taxon>Giardia</taxon>
    </lineage>
</organism>
<protein>
    <recommendedName>
        <fullName evidence="1">Small ribosomal subunit protein uS2</fullName>
    </recommendedName>
    <alternativeName>
        <fullName evidence="3">40S ribosomal protein SA</fullName>
    </alternativeName>
</protein>
<sequence>MSTEKTSQASKEYQLKEADVKKMLVATTHLGVRNIDRRMQFYIFDRQKDGTFVFNLQKVWAKIVFAARILVTIDDPAEIAVVANRPDAQRAILKFCKYTHATAFPGRFIPGNFTNRMNPNYCEPRLLLVNDPVVDRQAILEASYVNIPTISLCNSDANLKFIDVAIPCNNKTPMSIGLIYWLLAREVLRLKGSISRTEEWDVKPDLFVALPEEIPDEEESEDFYDDDEEEDEEFSAGNGNLFDEY</sequence>
<feature type="chain" id="PRO_0000371655" description="Small ribosomal subunit protein uS2">
    <location>
        <begin position="1"/>
        <end position="245"/>
    </location>
</feature>
<feature type="region of interest" description="Disordered" evidence="2">
    <location>
        <begin position="211"/>
        <end position="245"/>
    </location>
</feature>
<feature type="compositionally biased region" description="Acidic residues" evidence="2">
    <location>
        <begin position="213"/>
        <end position="234"/>
    </location>
</feature>
<feature type="helix" evidence="4">
    <location>
        <begin position="18"/>
        <end position="26"/>
    </location>
</feature>
<feature type="turn" evidence="4">
    <location>
        <begin position="27"/>
        <end position="29"/>
    </location>
</feature>
<feature type="helix" evidence="4">
    <location>
        <begin position="40"/>
        <end position="42"/>
    </location>
</feature>
<feature type="strand" evidence="4">
    <location>
        <begin position="43"/>
        <end position="46"/>
    </location>
</feature>
<feature type="strand" evidence="4">
    <location>
        <begin position="52"/>
        <end position="54"/>
    </location>
</feature>
<feature type="helix" evidence="4">
    <location>
        <begin position="56"/>
        <end position="70"/>
    </location>
</feature>
<feature type="helix" evidence="4">
    <location>
        <begin position="76"/>
        <end position="78"/>
    </location>
</feature>
<feature type="strand" evidence="4">
    <location>
        <begin position="79"/>
        <end position="82"/>
    </location>
</feature>
<feature type="helix" evidence="4">
    <location>
        <begin position="86"/>
        <end position="99"/>
    </location>
</feature>
<feature type="strand" evidence="4">
    <location>
        <begin position="102"/>
        <end position="104"/>
    </location>
</feature>
<feature type="turn" evidence="4">
    <location>
        <begin position="110"/>
        <end position="114"/>
    </location>
</feature>
<feature type="strand" evidence="4">
    <location>
        <begin position="125"/>
        <end position="130"/>
    </location>
</feature>
<feature type="helix" evidence="4">
    <location>
        <begin position="136"/>
        <end position="142"/>
    </location>
</feature>
<feature type="turn" evidence="4">
    <location>
        <begin position="143"/>
        <end position="146"/>
    </location>
</feature>
<feature type="strand" evidence="4">
    <location>
        <begin position="149"/>
        <end position="153"/>
    </location>
</feature>
<feature type="strand" evidence="4">
    <location>
        <begin position="163"/>
        <end position="168"/>
    </location>
</feature>
<feature type="helix" evidence="4">
    <location>
        <begin position="173"/>
        <end position="191"/>
    </location>
</feature>
<feature type="strand" evidence="4">
    <location>
        <begin position="192"/>
        <end position="194"/>
    </location>
</feature>
<feature type="strand" evidence="4">
    <location>
        <begin position="196"/>
        <end position="198"/>
    </location>
</feature>
<feature type="helix" evidence="4">
    <location>
        <begin position="204"/>
        <end position="207"/>
    </location>
</feature>
<proteinExistence type="evidence at protein level"/>
<gene>
    <name type="ORF">GL50803_7766</name>
</gene>